<dbReference type="EC" id="1.-.-.-"/>
<dbReference type="EMBL" id="AB001488">
    <property type="protein sequence ID" value="BAA19257.1"/>
    <property type="molecule type" value="Genomic_DNA"/>
</dbReference>
<dbReference type="EMBL" id="AL009126">
    <property type="protein sequence ID" value="CAB12226.1"/>
    <property type="molecule type" value="Genomic_DNA"/>
</dbReference>
<dbReference type="PIR" id="D69768">
    <property type="entry name" value="D69768"/>
</dbReference>
<dbReference type="RefSeq" id="NP_388300.1">
    <property type="nucleotide sequence ID" value="NC_000964.3"/>
</dbReference>
<dbReference type="RefSeq" id="WP_003246648.1">
    <property type="nucleotide sequence ID" value="NZ_OZ025638.1"/>
</dbReference>
<dbReference type="SMR" id="P80873"/>
<dbReference type="FunCoup" id="P80873">
    <property type="interactions" value="160"/>
</dbReference>
<dbReference type="STRING" id="224308.BSU04190"/>
<dbReference type="PaxDb" id="224308-BSU04190"/>
<dbReference type="DNASU" id="938251"/>
<dbReference type="EnsemblBacteria" id="CAB12226">
    <property type="protein sequence ID" value="CAB12226"/>
    <property type="gene ID" value="BSU_04190"/>
</dbReference>
<dbReference type="GeneID" id="938251"/>
<dbReference type="KEGG" id="bsu:BSU04190"/>
<dbReference type="PATRIC" id="fig|224308.179.peg.445"/>
<dbReference type="eggNOG" id="COG1028">
    <property type="taxonomic scope" value="Bacteria"/>
</dbReference>
<dbReference type="InParanoid" id="P80873"/>
<dbReference type="OrthoDB" id="9803333at2"/>
<dbReference type="PhylomeDB" id="P80873"/>
<dbReference type="BioCyc" id="BSUB:BSU04190-MONOMER"/>
<dbReference type="Proteomes" id="UP000001570">
    <property type="component" value="Chromosome"/>
</dbReference>
<dbReference type="GO" id="GO:0016614">
    <property type="term" value="F:oxidoreductase activity, acting on CH-OH group of donors"/>
    <property type="evidence" value="ECO:0007669"/>
    <property type="project" value="UniProtKB-ARBA"/>
</dbReference>
<dbReference type="CDD" id="cd05355">
    <property type="entry name" value="SDR_c1"/>
    <property type="match status" value="1"/>
</dbReference>
<dbReference type="FunFam" id="3.40.50.720:FF:000084">
    <property type="entry name" value="Short-chain dehydrogenase reductase"/>
    <property type="match status" value="1"/>
</dbReference>
<dbReference type="Gene3D" id="3.40.50.720">
    <property type="entry name" value="NAD(P)-binding Rossmann-like Domain"/>
    <property type="match status" value="1"/>
</dbReference>
<dbReference type="InterPro" id="IPR036291">
    <property type="entry name" value="NAD(P)-bd_dom_sf"/>
</dbReference>
<dbReference type="InterPro" id="IPR020904">
    <property type="entry name" value="Sc_DH/Rdtase_CS"/>
</dbReference>
<dbReference type="InterPro" id="IPR002347">
    <property type="entry name" value="SDR_fam"/>
</dbReference>
<dbReference type="NCBIfam" id="NF005214">
    <property type="entry name" value="PRK06701.1"/>
    <property type="match status" value="1"/>
</dbReference>
<dbReference type="PANTHER" id="PTHR48107:SF16">
    <property type="entry name" value="NADPH-DEPENDENT ALDEHYDE REDUCTASE 1, CHLOROPLASTIC"/>
    <property type="match status" value="1"/>
</dbReference>
<dbReference type="PANTHER" id="PTHR48107">
    <property type="entry name" value="NADPH-DEPENDENT ALDEHYDE REDUCTASE-LIKE PROTEIN, CHLOROPLASTIC-RELATED"/>
    <property type="match status" value="1"/>
</dbReference>
<dbReference type="Pfam" id="PF13561">
    <property type="entry name" value="adh_short_C2"/>
    <property type="match status" value="1"/>
</dbReference>
<dbReference type="PRINTS" id="PR00081">
    <property type="entry name" value="GDHRDH"/>
</dbReference>
<dbReference type="PRINTS" id="PR00080">
    <property type="entry name" value="SDRFAMILY"/>
</dbReference>
<dbReference type="SUPFAM" id="SSF51735">
    <property type="entry name" value="NAD(P)-binding Rossmann-fold domains"/>
    <property type="match status" value="1"/>
</dbReference>
<dbReference type="PROSITE" id="PS00061">
    <property type="entry name" value="ADH_SHORT"/>
    <property type="match status" value="1"/>
</dbReference>
<protein>
    <recommendedName>
        <fullName>General stress protein 39</fullName>
        <shortName>GSP39</shortName>
        <ecNumber>1.-.-.-</ecNumber>
    </recommendedName>
</protein>
<name>GS39_BACSU</name>
<feature type="initiator methionine" description="Removed" evidence="4">
    <location>
        <position position="1"/>
    </location>
</feature>
<feature type="chain" id="PRO_0000054842" description="General stress protein 39">
    <location>
        <begin position="2"/>
        <end position="286"/>
    </location>
</feature>
<feature type="region of interest" description="Disordered" evidence="3">
    <location>
        <begin position="1"/>
        <end position="26"/>
    </location>
</feature>
<feature type="active site" description="Proton acceptor" evidence="2">
    <location>
        <position position="191"/>
    </location>
</feature>
<feature type="binding site" evidence="1">
    <location>
        <begin position="46"/>
        <end position="70"/>
    </location>
    <ligand>
        <name>NAD(+)</name>
        <dbReference type="ChEBI" id="CHEBI:57540"/>
    </ligand>
</feature>
<feature type="binding site" evidence="1">
    <location>
        <position position="178"/>
    </location>
    <ligand>
        <name>substrate</name>
    </ligand>
</feature>
<feature type="sequence conflict" description="In Ref. 3; AA sequence." evidence="5" ref="3">
    <original>E</original>
    <variation>G</variation>
    <location>
        <position position="22"/>
    </location>
</feature>
<feature type="sequence conflict" description="In Ref. 3; AA sequence." evidence="5" ref="3">
    <original>P</original>
    <variation>K</variation>
    <location>
        <position position="27"/>
    </location>
</feature>
<reference key="1">
    <citation type="submission" date="1997-03" db="EMBL/GenBank/DDBJ databases">
        <title>A 148 kbp sequence of the region between 35 and 47 degree of the Bacillus subtilis genome.</title>
        <authorList>
            <person name="Kasahara Y."/>
            <person name="Nakai S."/>
            <person name="Lee S."/>
            <person name="Sadaie Y."/>
            <person name="Ogasawara N."/>
        </authorList>
    </citation>
    <scope>NUCLEOTIDE SEQUENCE [GENOMIC DNA]</scope>
    <source>
        <strain>168</strain>
    </source>
</reference>
<reference key="2">
    <citation type="journal article" date="1997" name="Nature">
        <title>The complete genome sequence of the Gram-positive bacterium Bacillus subtilis.</title>
        <authorList>
            <person name="Kunst F."/>
            <person name="Ogasawara N."/>
            <person name="Moszer I."/>
            <person name="Albertini A.M."/>
            <person name="Alloni G."/>
            <person name="Azevedo V."/>
            <person name="Bertero M.G."/>
            <person name="Bessieres P."/>
            <person name="Bolotin A."/>
            <person name="Borchert S."/>
            <person name="Borriss R."/>
            <person name="Boursier L."/>
            <person name="Brans A."/>
            <person name="Braun M."/>
            <person name="Brignell S.C."/>
            <person name="Bron S."/>
            <person name="Brouillet S."/>
            <person name="Bruschi C.V."/>
            <person name="Caldwell B."/>
            <person name="Capuano V."/>
            <person name="Carter N.M."/>
            <person name="Choi S.-K."/>
            <person name="Codani J.-J."/>
            <person name="Connerton I.F."/>
            <person name="Cummings N.J."/>
            <person name="Daniel R.A."/>
            <person name="Denizot F."/>
            <person name="Devine K.M."/>
            <person name="Duesterhoeft A."/>
            <person name="Ehrlich S.D."/>
            <person name="Emmerson P.T."/>
            <person name="Entian K.-D."/>
            <person name="Errington J."/>
            <person name="Fabret C."/>
            <person name="Ferrari E."/>
            <person name="Foulger D."/>
            <person name="Fritz C."/>
            <person name="Fujita M."/>
            <person name="Fujita Y."/>
            <person name="Fuma S."/>
            <person name="Galizzi A."/>
            <person name="Galleron N."/>
            <person name="Ghim S.-Y."/>
            <person name="Glaser P."/>
            <person name="Goffeau A."/>
            <person name="Golightly E.J."/>
            <person name="Grandi G."/>
            <person name="Guiseppi G."/>
            <person name="Guy B.J."/>
            <person name="Haga K."/>
            <person name="Haiech J."/>
            <person name="Harwood C.R."/>
            <person name="Henaut A."/>
            <person name="Hilbert H."/>
            <person name="Holsappel S."/>
            <person name="Hosono S."/>
            <person name="Hullo M.-F."/>
            <person name="Itaya M."/>
            <person name="Jones L.-M."/>
            <person name="Joris B."/>
            <person name="Karamata D."/>
            <person name="Kasahara Y."/>
            <person name="Klaerr-Blanchard M."/>
            <person name="Klein C."/>
            <person name="Kobayashi Y."/>
            <person name="Koetter P."/>
            <person name="Koningstein G."/>
            <person name="Krogh S."/>
            <person name="Kumano M."/>
            <person name="Kurita K."/>
            <person name="Lapidus A."/>
            <person name="Lardinois S."/>
            <person name="Lauber J."/>
            <person name="Lazarevic V."/>
            <person name="Lee S.-M."/>
            <person name="Levine A."/>
            <person name="Liu H."/>
            <person name="Masuda S."/>
            <person name="Mauel C."/>
            <person name="Medigue C."/>
            <person name="Medina N."/>
            <person name="Mellado R.P."/>
            <person name="Mizuno M."/>
            <person name="Moestl D."/>
            <person name="Nakai S."/>
            <person name="Noback M."/>
            <person name="Noone D."/>
            <person name="O'Reilly M."/>
            <person name="Ogawa K."/>
            <person name="Ogiwara A."/>
            <person name="Oudega B."/>
            <person name="Park S.-H."/>
            <person name="Parro V."/>
            <person name="Pohl T.M."/>
            <person name="Portetelle D."/>
            <person name="Porwollik S."/>
            <person name="Prescott A.M."/>
            <person name="Presecan E."/>
            <person name="Pujic P."/>
            <person name="Purnelle B."/>
            <person name="Rapoport G."/>
            <person name="Rey M."/>
            <person name="Reynolds S."/>
            <person name="Rieger M."/>
            <person name="Rivolta C."/>
            <person name="Rocha E."/>
            <person name="Roche B."/>
            <person name="Rose M."/>
            <person name="Sadaie Y."/>
            <person name="Sato T."/>
            <person name="Scanlan E."/>
            <person name="Schleich S."/>
            <person name="Schroeter R."/>
            <person name="Scoffone F."/>
            <person name="Sekiguchi J."/>
            <person name="Sekowska A."/>
            <person name="Seror S.J."/>
            <person name="Serror P."/>
            <person name="Shin B.-S."/>
            <person name="Soldo B."/>
            <person name="Sorokin A."/>
            <person name="Tacconi E."/>
            <person name="Takagi T."/>
            <person name="Takahashi H."/>
            <person name="Takemaru K."/>
            <person name="Takeuchi M."/>
            <person name="Tamakoshi A."/>
            <person name="Tanaka T."/>
            <person name="Terpstra P."/>
            <person name="Tognoni A."/>
            <person name="Tosato V."/>
            <person name="Uchiyama S."/>
            <person name="Vandenbol M."/>
            <person name="Vannier F."/>
            <person name="Vassarotti A."/>
            <person name="Viari A."/>
            <person name="Wambutt R."/>
            <person name="Wedler E."/>
            <person name="Wedler H."/>
            <person name="Weitzenegger T."/>
            <person name="Winters P."/>
            <person name="Wipat A."/>
            <person name="Yamamoto H."/>
            <person name="Yamane K."/>
            <person name="Yasumoto K."/>
            <person name="Yata K."/>
            <person name="Yoshida K."/>
            <person name="Yoshikawa H.-F."/>
            <person name="Zumstein E."/>
            <person name="Yoshikawa H."/>
            <person name="Danchin A."/>
        </authorList>
    </citation>
    <scope>NUCLEOTIDE SEQUENCE [LARGE SCALE GENOMIC DNA]</scope>
    <source>
        <strain>168</strain>
    </source>
</reference>
<reference key="3">
    <citation type="journal article" date="1997" name="Electrophoresis">
        <title>First steps from a two-dimensional protein index towards a response-regulation map for Bacillus subtilis.</title>
        <authorList>
            <person name="Antelmann H."/>
            <person name="Bernhardt J."/>
            <person name="Schmid R."/>
            <person name="Mach H."/>
            <person name="Voelker U."/>
            <person name="Hecker M."/>
        </authorList>
    </citation>
    <scope>PROTEIN SEQUENCE OF 2-30</scope>
    <source>
        <strain>168 / IS58</strain>
    </source>
</reference>
<evidence type="ECO:0000250" key="1"/>
<evidence type="ECO:0000255" key="2">
    <source>
        <dbReference type="PROSITE-ProRule" id="PRU10001"/>
    </source>
</evidence>
<evidence type="ECO:0000256" key="3">
    <source>
        <dbReference type="SAM" id="MobiDB-lite"/>
    </source>
</evidence>
<evidence type="ECO:0000269" key="4">
    <source>
    </source>
</evidence>
<evidence type="ECO:0000305" key="5"/>
<keyword id="KW-0903">Direct protein sequencing</keyword>
<keyword id="KW-0560">Oxidoreductase</keyword>
<keyword id="KW-1185">Reference proteome</keyword>
<keyword id="KW-0346">Stress response</keyword>
<sequence length="286" mass="31082">MANYPKELPAQTQSRQPGIESEMNPSPVYEYEDYKGADKLKGKVALITGGDSGIGRAVSVAYAKEGADIAIVYKDEHEDAEETKKRVEQEGVKCLLIAGDVGEEEFCNEAVEKTVKELGGLDILVNNAGEQHPKESIKDITSEQLHRTFKTNFYSQFYLTKKAIDYLKPGSAIINTTSINPYVGNPTLIDYTATKGAINAFTRTMAQALVKDGIRVNAVAPGPIWTPLIPATFPEETVAQFGQDTPMGRPGQPVEHVGCYVLLASDESSYMTGQTLHVNGGNFVTT</sequence>
<proteinExistence type="evidence at protein level"/>
<organism>
    <name type="scientific">Bacillus subtilis (strain 168)</name>
    <dbReference type="NCBI Taxonomy" id="224308"/>
    <lineage>
        <taxon>Bacteria</taxon>
        <taxon>Bacillati</taxon>
        <taxon>Bacillota</taxon>
        <taxon>Bacilli</taxon>
        <taxon>Bacillales</taxon>
        <taxon>Bacillaceae</taxon>
        <taxon>Bacillus</taxon>
    </lineage>
</organism>
<accession>P80873</accession>
<accession>P96577</accession>
<comment type="induction">
    <text>By heat shock, salt stress, oxidative stress, glucose limitation and oxygen limitation.</text>
</comment>
<comment type="similarity">
    <text evidence="5">Belongs to the short-chain dehydrogenases/reductases (SDR) family.</text>
</comment>
<gene>
    <name type="primary">ydaD</name>
    <name type="ordered locus">BSU04190</name>
</gene>